<organism>
    <name type="scientific">Rickettsia bellii (strain OSU 85-389)</name>
    <dbReference type="NCBI Taxonomy" id="391896"/>
    <lineage>
        <taxon>Bacteria</taxon>
        <taxon>Pseudomonadati</taxon>
        <taxon>Pseudomonadota</taxon>
        <taxon>Alphaproteobacteria</taxon>
        <taxon>Rickettsiales</taxon>
        <taxon>Rickettsiaceae</taxon>
        <taxon>Rickettsieae</taxon>
        <taxon>Rickettsia</taxon>
        <taxon>belli group</taxon>
    </lineage>
</organism>
<dbReference type="EC" id="6.1.1.15" evidence="1"/>
<dbReference type="EMBL" id="CP000849">
    <property type="protein sequence ID" value="ABV79359.1"/>
    <property type="molecule type" value="Genomic_DNA"/>
</dbReference>
<dbReference type="RefSeq" id="WP_011477472.1">
    <property type="nucleotide sequence ID" value="NC_009883.1"/>
</dbReference>
<dbReference type="SMR" id="A8GU77"/>
<dbReference type="KEGG" id="rbo:A1I_05150"/>
<dbReference type="HOGENOM" id="CLU_016739_4_2_5"/>
<dbReference type="GO" id="GO:0005829">
    <property type="term" value="C:cytosol"/>
    <property type="evidence" value="ECO:0007669"/>
    <property type="project" value="TreeGrafter"/>
</dbReference>
<dbReference type="GO" id="GO:0005524">
    <property type="term" value="F:ATP binding"/>
    <property type="evidence" value="ECO:0007669"/>
    <property type="project" value="UniProtKB-UniRule"/>
</dbReference>
<dbReference type="GO" id="GO:0004827">
    <property type="term" value="F:proline-tRNA ligase activity"/>
    <property type="evidence" value="ECO:0007669"/>
    <property type="project" value="UniProtKB-UniRule"/>
</dbReference>
<dbReference type="GO" id="GO:0006433">
    <property type="term" value="P:prolyl-tRNA aminoacylation"/>
    <property type="evidence" value="ECO:0007669"/>
    <property type="project" value="UniProtKB-UniRule"/>
</dbReference>
<dbReference type="CDD" id="cd00861">
    <property type="entry name" value="ProRS_anticodon_short"/>
    <property type="match status" value="1"/>
</dbReference>
<dbReference type="CDD" id="cd00779">
    <property type="entry name" value="ProRS_core_prok"/>
    <property type="match status" value="1"/>
</dbReference>
<dbReference type="FunFam" id="3.30.930.10:FF:000042">
    <property type="entry name" value="probable proline--tRNA ligase, mitochondrial"/>
    <property type="match status" value="1"/>
</dbReference>
<dbReference type="FunFam" id="3.40.50.800:FF:000032">
    <property type="entry name" value="Proline--tRNA ligase"/>
    <property type="match status" value="1"/>
</dbReference>
<dbReference type="Gene3D" id="3.40.50.800">
    <property type="entry name" value="Anticodon-binding domain"/>
    <property type="match status" value="1"/>
</dbReference>
<dbReference type="Gene3D" id="3.30.930.10">
    <property type="entry name" value="Bira Bifunctional Protein, Domain 2"/>
    <property type="match status" value="1"/>
</dbReference>
<dbReference type="HAMAP" id="MF_01570">
    <property type="entry name" value="Pro_tRNA_synth_type2"/>
    <property type="match status" value="1"/>
</dbReference>
<dbReference type="InterPro" id="IPR002314">
    <property type="entry name" value="aa-tRNA-synt_IIb"/>
</dbReference>
<dbReference type="InterPro" id="IPR006195">
    <property type="entry name" value="aa-tRNA-synth_II"/>
</dbReference>
<dbReference type="InterPro" id="IPR045864">
    <property type="entry name" value="aa-tRNA-synth_II/BPL/LPL"/>
</dbReference>
<dbReference type="InterPro" id="IPR004154">
    <property type="entry name" value="Anticodon-bd"/>
</dbReference>
<dbReference type="InterPro" id="IPR036621">
    <property type="entry name" value="Anticodon-bd_dom_sf"/>
</dbReference>
<dbReference type="InterPro" id="IPR002316">
    <property type="entry name" value="Pro-tRNA-ligase_IIa"/>
</dbReference>
<dbReference type="InterPro" id="IPR004500">
    <property type="entry name" value="Pro-tRNA-synth_IIa_bac-type"/>
</dbReference>
<dbReference type="InterPro" id="IPR050062">
    <property type="entry name" value="Pro-tRNA_synthetase"/>
</dbReference>
<dbReference type="InterPro" id="IPR023716">
    <property type="entry name" value="Prolyl-tRNA_ligase_IIa_type2"/>
</dbReference>
<dbReference type="InterPro" id="IPR044140">
    <property type="entry name" value="ProRS_anticodon_short"/>
</dbReference>
<dbReference type="InterPro" id="IPR033730">
    <property type="entry name" value="ProRS_core_prok"/>
</dbReference>
<dbReference type="NCBIfam" id="NF008979">
    <property type="entry name" value="PRK12325.1"/>
    <property type="match status" value="1"/>
</dbReference>
<dbReference type="NCBIfam" id="TIGR00409">
    <property type="entry name" value="proS_fam_II"/>
    <property type="match status" value="1"/>
</dbReference>
<dbReference type="PANTHER" id="PTHR42753">
    <property type="entry name" value="MITOCHONDRIAL RIBOSOME PROTEIN L39/PROLYL-TRNA LIGASE FAMILY MEMBER"/>
    <property type="match status" value="1"/>
</dbReference>
<dbReference type="PANTHER" id="PTHR42753:SF2">
    <property type="entry name" value="PROLINE--TRNA LIGASE"/>
    <property type="match status" value="1"/>
</dbReference>
<dbReference type="Pfam" id="PF03129">
    <property type="entry name" value="HGTP_anticodon"/>
    <property type="match status" value="1"/>
</dbReference>
<dbReference type="Pfam" id="PF00587">
    <property type="entry name" value="tRNA-synt_2b"/>
    <property type="match status" value="1"/>
</dbReference>
<dbReference type="PRINTS" id="PR01046">
    <property type="entry name" value="TRNASYNTHPRO"/>
</dbReference>
<dbReference type="SUPFAM" id="SSF52954">
    <property type="entry name" value="Class II aaRS ABD-related"/>
    <property type="match status" value="1"/>
</dbReference>
<dbReference type="SUPFAM" id="SSF55681">
    <property type="entry name" value="Class II aaRS and biotin synthetases"/>
    <property type="match status" value="1"/>
</dbReference>
<dbReference type="PROSITE" id="PS50862">
    <property type="entry name" value="AA_TRNA_LIGASE_II"/>
    <property type="match status" value="1"/>
</dbReference>
<accession>A8GU77</accession>
<protein>
    <recommendedName>
        <fullName evidence="1">Proline--tRNA ligase</fullName>
        <ecNumber evidence="1">6.1.1.15</ecNumber>
    </recommendedName>
    <alternativeName>
        <fullName evidence="1">Prolyl-tRNA synthetase</fullName>
        <shortName evidence="1">ProRS</shortName>
    </alternativeName>
</protein>
<feature type="chain" id="PRO_1000069184" description="Proline--tRNA ligase">
    <location>
        <begin position="1"/>
        <end position="432"/>
    </location>
</feature>
<comment type="function">
    <text evidence="1">Catalyzes the attachment of proline to tRNA(Pro) in a two-step reaction: proline is first activated by ATP to form Pro-AMP and then transferred to the acceptor end of tRNA(Pro).</text>
</comment>
<comment type="catalytic activity">
    <reaction evidence="1">
        <text>tRNA(Pro) + L-proline + ATP = L-prolyl-tRNA(Pro) + AMP + diphosphate</text>
        <dbReference type="Rhea" id="RHEA:14305"/>
        <dbReference type="Rhea" id="RHEA-COMP:9700"/>
        <dbReference type="Rhea" id="RHEA-COMP:9702"/>
        <dbReference type="ChEBI" id="CHEBI:30616"/>
        <dbReference type="ChEBI" id="CHEBI:33019"/>
        <dbReference type="ChEBI" id="CHEBI:60039"/>
        <dbReference type="ChEBI" id="CHEBI:78442"/>
        <dbReference type="ChEBI" id="CHEBI:78532"/>
        <dbReference type="ChEBI" id="CHEBI:456215"/>
        <dbReference type="EC" id="6.1.1.15"/>
    </reaction>
</comment>
<comment type="subunit">
    <text evidence="1">Homodimer.</text>
</comment>
<comment type="subcellular location">
    <subcellularLocation>
        <location evidence="1">Cytoplasm</location>
    </subcellularLocation>
</comment>
<comment type="similarity">
    <text evidence="1">Belongs to the class-II aminoacyl-tRNA synthetase family. ProS type 2 subfamily.</text>
</comment>
<proteinExistence type="inferred from homology"/>
<gene>
    <name evidence="1" type="primary">proS</name>
    <name type="ordered locus">A1I_05150</name>
</gene>
<name>SYP_RICB8</name>
<evidence type="ECO:0000255" key="1">
    <source>
        <dbReference type="HAMAP-Rule" id="MF_01570"/>
    </source>
</evidence>
<sequence>MLLSKYFLPVLKEDPSEAQITSHKLMLRSGMIRQQAAGIYSWLPLGLKVLKNIENIVRSNMDKAGCLEVLMPCIQPAHLWVESGRFDNYGKEMLKFQDRHDNTLLFGPTNEDMVTDIFRNNIKSYKDLPKNLYHIQWKFRDEIRPRFGVMRGREFLMKDAYSFDIDEESAVKTYNQMYKAYINTFRDLGVFAVPVIADNGPIGGKLSHEFHIIAETGESNIYYDKRFKTLKDNPDIDIEEIKSWYAAAEEKHDASKLSSDKEITSSKGIEVGHIFYIGTKYSVNMNALINDEHGKLTPIEMSSYGIGISRLVAAIIEANSDAKGIIWPIAVAPFKISLINLNIHDSKCLELAERVYNELLAQNIEVLYDDTDVRAGSKFATHDLIGSPYQIIIGPKKAANNIVELKNRKNGEIEDIDLNKRALNSYLTFFNS</sequence>
<reference key="1">
    <citation type="submission" date="2007-09" db="EMBL/GenBank/DDBJ databases">
        <title>Complete genome sequencing of Rickettsia bellii.</title>
        <authorList>
            <person name="Madan A."/>
            <person name="Lee H."/>
            <person name="Madan A."/>
            <person name="Yoon J.-G."/>
            <person name="Ryu G.-Y."/>
            <person name="Dasch G."/>
            <person name="Ereemeva M."/>
        </authorList>
    </citation>
    <scope>NUCLEOTIDE SEQUENCE [LARGE SCALE GENOMIC DNA]</scope>
    <source>
        <strain>OSU 85-389</strain>
    </source>
</reference>
<keyword id="KW-0030">Aminoacyl-tRNA synthetase</keyword>
<keyword id="KW-0067">ATP-binding</keyword>
<keyword id="KW-0963">Cytoplasm</keyword>
<keyword id="KW-0436">Ligase</keyword>
<keyword id="KW-0547">Nucleotide-binding</keyword>
<keyword id="KW-0648">Protein biosynthesis</keyword>